<sequence length="314" mass="36156">MNKTKPPVIVLIGPTAVGKTKLSVMLAERLNAEIISGDSMQIYKRMDIGTAKIREEEMNGVPHHLIDIKEPTESFSVAEYQEIVRQKIAEIDRRGKLPMIVGGTGLYIQSVLYDYSFTEEAGDPEFRAEMEAFSAKRGAEYVHDLLKERDPEAARAIHPNNKRRVIRALEILHTTGKTMSEHMEGQRKELLYTTALIGLTMEREVLYDRINSRVDQMMDEGLLDEVKLLYDENVRNCQSVQAIGYKELYAHLEGRASLEEAVETLKRNSRRYAKRQLTWFRNQMDVAWFDMTPPVNIEQKKQEIFTYIAGKLEL</sequence>
<gene>
    <name evidence="1" type="primary">miaA</name>
    <name type="ordered locus">BLi01961</name>
    <name type="ordered locus">BL05174</name>
</gene>
<keyword id="KW-0067">ATP-binding</keyword>
<keyword id="KW-0460">Magnesium</keyword>
<keyword id="KW-0547">Nucleotide-binding</keyword>
<keyword id="KW-1185">Reference proteome</keyword>
<keyword id="KW-0808">Transferase</keyword>
<keyword id="KW-0819">tRNA processing</keyword>
<protein>
    <recommendedName>
        <fullName evidence="1">tRNA dimethylallyltransferase</fullName>
        <ecNumber evidence="1">2.5.1.75</ecNumber>
    </recommendedName>
    <alternativeName>
        <fullName evidence="1">Dimethylallyl diphosphate:tRNA dimethylallyltransferase</fullName>
        <shortName evidence="1">DMAPP:tRNA dimethylallyltransferase</shortName>
        <shortName evidence="1">DMATase</shortName>
    </alternativeName>
    <alternativeName>
        <fullName evidence="1">Isopentenyl-diphosphate:tRNA isopentenyltransferase</fullName>
        <shortName evidence="1">IPP transferase</shortName>
        <shortName evidence="1">IPPT</shortName>
        <shortName evidence="1">IPTase</shortName>
    </alternativeName>
</protein>
<proteinExistence type="inferred from homology"/>
<name>MIAA_BACLD</name>
<organism>
    <name type="scientific">Bacillus licheniformis (strain ATCC 14580 / DSM 13 / JCM 2505 / CCUG 7422 / NBRC 12200 / NCIMB 9375 / NCTC 10341 / NRRL NRS-1264 / Gibson 46)</name>
    <dbReference type="NCBI Taxonomy" id="279010"/>
    <lineage>
        <taxon>Bacteria</taxon>
        <taxon>Bacillati</taxon>
        <taxon>Bacillota</taxon>
        <taxon>Bacilli</taxon>
        <taxon>Bacillales</taxon>
        <taxon>Bacillaceae</taxon>
        <taxon>Bacillus</taxon>
    </lineage>
</organism>
<evidence type="ECO:0000255" key="1">
    <source>
        <dbReference type="HAMAP-Rule" id="MF_00185"/>
    </source>
</evidence>
<comment type="function">
    <text evidence="1">Catalyzes the transfer of a dimethylallyl group onto the adenine at position 37 in tRNAs that read codons beginning with uridine, leading to the formation of N6-(dimethylallyl)adenosine (i(6)A).</text>
</comment>
<comment type="catalytic activity">
    <reaction evidence="1">
        <text>adenosine(37) in tRNA + dimethylallyl diphosphate = N(6)-dimethylallyladenosine(37) in tRNA + diphosphate</text>
        <dbReference type="Rhea" id="RHEA:26482"/>
        <dbReference type="Rhea" id="RHEA-COMP:10162"/>
        <dbReference type="Rhea" id="RHEA-COMP:10375"/>
        <dbReference type="ChEBI" id="CHEBI:33019"/>
        <dbReference type="ChEBI" id="CHEBI:57623"/>
        <dbReference type="ChEBI" id="CHEBI:74411"/>
        <dbReference type="ChEBI" id="CHEBI:74415"/>
        <dbReference type="EC" id="2.5.1.75"/>
    </reaction>
</comment>
<comment type="cofactor">
    <cofactor evidence="1">
        <name>Mg(2+)</name>
        <dbReference type="ChEBI" id="CHEBI:18420"/>
    </cofactor>
</comment>
<comment type="subunit">
    <text evidence="1">Monomer.</text>
</comment>
<comment type="similarity">
    <text evidence="1">Belongs to the IPP transferase family.</text>
</comment>
<feature type="chain" id="PRO_1000020564" description="tRNA dimethylallyltransferase">
    <location>
        <begin position="1"/>
        <end position="314"/>
    </location>
</feature>
<feature type="region of interest" description="Interaction with substrate tRNA" evidence="1">
    <location>
        <begin position="38"/>
        <end position="41"/>
    </location>
</feature>
<feature type="binding site" evidence="1">
    <location>
        <begin position="13"/>
        <end position="20"/>
    </location>
    <ligand>
        <name>ATP</name>
        <dbReference type="ChEBI" id="CHEBI:30616"/>
    </ligand>
</feature>
<feature type="binding site" evidence="1">
    <location>
        <begin position="15"/>
        <end position="20"/>
    </location>
    <ligand>
        <name>substrate</name>
    </ligand>
</feature>
<feature type="site" description="Interaction with substrate tRNA" evidence="1">
    <location>
        <position position="104"/>
    </location>
</feature>
<feature type="site" description="Interaction with substrate tRNA" evidence="1">
    <location>
        <position position="127"/>
    </location>
</feature>
<reference key="1">
    <citation type="journal article" date="2004" name="J. Mol. Microbiol. Biotechnol.">
        <title>The complete genome sequence of Bacillus licheniformis DSM13, an organism with great industrial potential.</title>
        <authorList>
            <person name="Veith B."/>
            <person name="Herzberg C."/>
            <person name="Steckel S."/>
            <person name="Feesche J."/>
            <person name="Maurer K.H."/>
            <person name="Ehrenreich P."/>
            <person name="Baeumer S."/>
            <person name="Henne A."/>
            <person name="Liesegang H."/>
            <person name="Merkl R."/>
            <person name="Ehrenreich A."/>
            <person name="Gottschalk G."/>
        </authorList>
    </citation>
    <scope>NUCLEOTIDE SEQUENCE [LARGE SCALE GENOMIC DNA]</scope>
    <source>
        <strain>ATCC 14580 / DSM 13 / JCM 2505 / CCUG 7422 / NBRC 12200 / NCIMB 9375 / NCTC 10341 / NRRL NRS-1264 / Gibson 46</strain>
    </source>
</reference>
<reference key="2">
    <citation type="journal article" date="2004" name="Genome Biol.">
        <title>Complete genome sequence of the industrial bacterium Bacillus licheniformis and comparisons with closely related Bacillus species.</title>
        <authorList>
            <person name="Rey M.W."/>
            <person name="Ramaiya P."/>
            <person name="Nelson B.A."/>
            <person name="Brody-Karpin S.D."/>
            <person name="Zaretsky E.J."/>
            <person name="Tang M."/>
            <person name="Lopez de Leon A."/>
            <person name="Xiang H."/>
            <person name="Gusti V."/>
            <person name="Clausen I.G."/>
            <person name="Olsen P.B."/>
            <person name="Rasmussen M.D."/>
            <person name="Andersen J.T."/>
            <person name="Joergensen P.L."/>
            <person name="Larsen T.S."/>
            <person name="Sorokin A."/>
            <person name="Bolotin A."/>
            <person name="Lapidus A."/>
            <person name="Galleron N."/>
            <person name="Ehrlich S.D."/>
            <person name="Berka R.M."/>
        </authorList>
    </citation>
    <scope>NUCLEOTIDE SEQUENCE [LARGE SCALE GENOMIC DNA]</scope>
    <source>
        <strain>ATCC 14580 / DSM 13 / JCM 2505 / CCUG 7422 / NBRC 12200 / NCIMB 9375 / NCTC 10341 / NRRL NRS-1264 / Gibson 46</strain>
    </source>
</reference>
<accession>Q65JA9</accession>
<accession>Q62UR6</accession>
<dbReference type="EC" id="2.5.1.75" evidence="1"/>
<dbReference type="EMBL" id="CP000002">
    <property type="protein sequence ID" value="AAU23493.1"/>
    <property type="molecule type" value="Genomic_DNA"/>
</dbReference>
<dbReference type="EMBL" id="AE017333">
    <property type="protein sequence ID" value="AAU40855.1"/>
    <property type="molecule type" value="Genomic_DNA"/>
</dbReference>
<dbReference type="RefSeq" id="WP_003182046.1">
    <property type="nucleotide sequence ID" value="NC_006322.1"/>
</dbReference>
<dbReference type="SMR" id="Q65JA9"/>
<dbReference type="STRING" id="279010.BL05174"/>
<dbReference type="GeneID" id="92861446"/>
<dbReference type="KEGG" id="bld:BLi01961"/>
<dbReference type="KEGG" id="bli:BL05174"/>
<dbReference type="PATRIC" id="fig|279010.13.peg.1965"/>
<dbReference type="eggNOG" id="COG0324">
    <property type="taxonomic scope" value="Bacteria"/>
</dbReference>
<dbReference type="HOGENOM" id="CLU_032616_0_1_9"/>
<dbReference type="Proteomes" id="UP000000606">
    <property type="component" value="Chromosome"/>
</dbReference>
<dbReference type="GO" id="GO:0005524">
    <property type="term" value="F:ATP binding"/>
    <property type="evidence" value="ECO:0007669"/>
    <property type="project" value="UniProtKB-UniRule"/>
</dbReference>
<dbReference type="GO" id="GO:0052381">
    <property type="term" value="F:tRNA dimethylallyltransferase activity"/>
    <property type="evidence" value="ECO:0007669"/>
    <property type="project" value="UniProtKB-UniRule"/>
</dbReference>
<dbReference type="GO" id="GO:0006400">
    <property type="term" value="P:tRNA modification"/>
    <property type="evidence" value="ECO:0007669"/>
    <property type="project" value="TreeGrafter"/>
</dbReference>
<dbReference type="FunFam" id="1.10.20.140:FF:000001">
    <property type="entry name" value="tRNA dimethylallyltransferase"/>
    <property type="match status" value="1"/>
</dbReference>
<dbReference type="Gene3D" id="1.10.20.140">
    <property type="match status" value="1"/>
</dbReference>
<dbReference type="Gene3D" id="3.40.50.300">
    <property type="entry name" value="P-loop containing nucleotide triphosphate hydrolases"/>
    <property type="match status" value="1"/>
</dbReference>
<dbReference type="HAMAP" id="MF_00185">
    <property type="entry name" value="IPP_trans"/>
    <property type="match status" value="1"/>
</dbReference>
<dbReference type="InterPro" id="IPR039657">
    <property type="entry name" value="Dimethylallyltransferase"/>
</dbReference>
<dbReference type="InterPro" id="IPR018022">
    <property type="entry name" value="IPT"/>
</dbReference>
<dbReference type="InterPro" id="IPR027417">
    <property type="entry name" value="P-loop_NTPase"/>
</dbReference>
<dbReference type="NCBIfam" id="TIGR00174">
    <property type="entry name" value="miaA"/>
    <property type="match status" value="1"/>
</dbReference>
<dbReference type="PANTHER" id="PTHR11088">
    <property type="entry name" value="TRNA DIMETHYLALLYLTRANSFERASE"/>
    <property type="match status" value="1"/>
</dbReference>
<dbReference type="PANTHER" id="PTHR11088:SF60">
    <property type="entry name" value="TRNA DIMETHYLALLYLTRANSFERASE"/>
    <property type="match status" value="1"/>
</dbReference>
<dbReference type="Pfam" id="PF01715">
    <property type="entry name" value="IPPT"/>
    <property type="match status" value="1"/>
</dbReference>
<dbReference type="SUPFAM" id="SSF52540">
    <property type="entry name" value="P-loop containing nucleoside triphosphate hydrolases"/>
    <property type="match status" value="2"/>
</dbReference>